<comment type="function">
    <text evidence="6 8">ABC transporter that may provide the dual role of fumonisin export and self-protection by allowing the fungus to evade the harmful effect of its own fumonisin production (PubMed:12620260, PubMed:32546615). Plays a role in the repression of the gene cluster that mediates fumonisin biosynthesis (PubMed:32546615).</text>
</comment>
<comment type="subcellular location">
    <subcellularLocation>
        <location evidence="10">Cell membrane</location>
        <topology evidence="1">Multi-pass membrane protein</topology>
    </subcellularLocation>
</comment>
<comment type="induction">
    <text evidence="7 8">Expression is strongly reduced by benomyl (PubMed:25217721). Induced by exogenous fumonisin B1 (PubMed:32546615).</text>
</comment>
<comment type="disruption phenotype">
    <text evidence="6 8">Does not affect the production of fumonisins B1 and B2, but strongly decreases the production of fumonisin B3 (PubMed:12620260). Causes overproduction of fumonisin B1 in the mycelium and supernatant (PubMed:32546615). Increases the expression of FUM8, FUM17 and FUM18 (PubMed:32546615).</text>
</comment>
<comment type="similarity">
    <text evidence="10">Belongs to the ABC transporter superfamily. ABCC family. Conjugate transporter (TC 3.A.1.208) subfamily.</text>
</comment>
<comment type="sequence caution" evidence="10">
    <conflict type="erroneous gene model prediction">
        <sequence resource="EMBL-CDS" id="EWG36213"/>
    </conflict>
</comment>
<gene>
    <name evidence="9" type="primary">FUM19</name>
    <name type="ORF">FVEG_00329</name>
</gene>
<keyword id="KW-0067">ATP-binding</keyword>
<keyword id="KW-1003">Cell membrane</keyword>
<keyword id="KW-0325">Glycoprotein</keyword>
<keyword id="KW-0378">Hydrolase</keyword>
<keyword id="KW-0472">Membrane</keyword>
<keyword id="KW-0547">Nucleotide-binding</keyword>
<keyword id="KW-0597">Phosphoprotein</keyword>
<keyword id="KW-1185">Reference proteome</keyword>
<keyword id="KW-0677">Repeat</keyword>
<keyword id="KW-0812">Transmembrane</keyword>
<keyword id="KW-1133">Transmembrane helix</keyword>
<keyword id="KW-0813">Transport</keyword>
<protein>
    <recommendedName>
        <fullName evidence="9">ABC transporter FUM19</fullName>
    </recommendedName>
    <alternativeName>
        <fullName evidence="9">Fumonisin biosynthesis cluster protein 19</fullName>
    </alternativeName>
</protein>
<sequence>MMNFEGCPSDASFGPFVKGCRGDFDFTLKFELIIFFIAPSCVFTALTFVRIFVLVSKSRIMTGNRIPLNLIKNVYSPIQIRENCFSSSQVLGLVAGMTTAALSYYEHWYSRRPSMLLSIYLFLSLLLDIAHDRTLWLNAYSTLEYGFSSVFSAAVAIKAFAVWLESRPLSKLPWGDSHVKETPDSTSGVYSLSSFMWLRGLLRLGYRKVLALSDLPALHGNMLGVVYDRFRKCSVNHFTRAEQSQERGKYKLVHALSTTLTLHLLLPVLPRIALIGLSLAQAFLTQAVLRYLEEDQPHSYSWGLIGATVLIYGGISICTSLYWYFHERLLCLVRGCLASAIFHKTLELSLTSNARSASVTLMSTDIDRIHKGFLNLHELWANIVEAGLAAWFLWRQVGIAFIAPIGLVLLSFLGVSIVGNYVGLYQKAWMGKIQNRVAITANVISNIKHLKVSGMTRPVESIIQNTRESELRASRGTRRLQIASLIIAFAPDLTAPGIMLAATKSQDFSSHKVYTAIALLTLLTVPLGSIFRSVSPLMSAFACLERIQAFLELDTRKDPRLITHSTPDTSSASGDEKVYADPLPMSRSSAVKVIQASFGWQGKEQACLKNINLTVNYSALTAIIGPVGSGKSTLCKALLGETPFSAGKVVLERDASCKVGYCDQTPFIRNCSIKENIVGFSKWNPVRYLEVVEASMLSYDLRELPEGDATIVGSGGMTLSGGQKQRIAIARSLYLDTRLLILDDILSGLDTQTEHHLFQHVLSPNGLLKKRENAPAIVFSTHSVKYARWADHIFLLNEKGEMIEQGSWEELSTYQSHLQSLCIQEKVQMTDLKQLEPVESEQPLDVTMSEIEQTRSSRRGADNQETIASGADSSARQNGDLGVYRHYFRAVPPVAIISFVTSSLSYGFLYSFPNIWLKWWLLDADSTRPHHPKAFWNGIYAMFQILALLSELLTMYLALTYFALISGATVHSSALRAITRAPLYFFASVDLGTITNYFSQDMTLVDGALPASLIQFASDVAASLGMAGNLAASSPYLAASYPLCFFLLYFVTKYYLRTSRQLRLLDLEAKSPLYAHFLELENGIATIRAADWTGEYLVQSRLLLDVSQRPAYLLAMVQRWLLFILNTFVSLLALFTVALVTQLNNHGTGFAGAGLISLMQIGQFLTNVVRSYATLEVSMGAVSRLKALTESPHRECIEGQEVVPPQEWPCRGSIKIDGVSASYDSQNDQVNEKSFSLRELNLHIEAGQKVAICGRTGSGKSSIILLLLHMLRPLRNTREDAITIDGISIQNVDPPILRERIFAVPQDTIFLPQGSSWLENMEPFATNAAECRSVLEDVNLWDVVIAQGGDLTAALDSDTLSQGQRQLFGLARAVLRKRAKAQSMSEPAPQGGLLLLDEPSSAVDFETEGLMHRVIQREFCEYTVIMVTHRLEFITQIHSVGQVSVDTQQGLFDRVLVVDAGTIVEDGHPAQLLESKEGKFRALWEASRV</sequence>
<feature type="chain" id="PRO_0000441154" description="ABC transporter FUM19">
    <location>
        <begin position="1"/>
        <end position="1489"/>
    </location>
</feature>
<feature type="transmembrane region" description="Helical" evidence="1">
    <location>
        <begin position="33"/>
        <end position="53"/>
    </location>
</feature>
<feature type="transmembrane region" description="Helical" evidence="1">
    <location>
        <begin position="84"/>
        <end position="104"/>
    </location>
</feature>
<feature type="transmembrane region" description="Helical" evidence="1">
    <location>
        <begin position="116"/>
        <end position="136"/>
    </location>
</feature>
<feature type="transmembrane region" description="Helical" evidence="1">
    <location>
        <begin position="143"/>
        <end position="163"/>
    </location>
</feature>
<feature type="transmembrane region" description="Helical" evidence="1 3">
    <location>
        <begin position="264"/>
        <end position="284"/>
    </location>
</feature>
<feature type="transmembrane region" description="Helical" evidence="1 3">
    <location>
        <begin position="302"/>
        <end position="322"/>
    </location>
</feature>
<feature type="transmembrane region" description="Helical" evidence="1 3">
    <location>
        <begin position="373"/>
        <end position="393"/>
    </location>
</feature>
<feature type="transmembrane region" description="Helical" evidence="1 3">
    <location>
        <begin position="397"/>
        <end position="417"/>
    </location>
</feature>
<feature type="transmembrane region" description="Helical" evidence="1 3">
    <location>
        <begin position="482"/>
        <end position="502"/>
    </location>
</feature>
<feature type="transmembrane region" description="Helical" evidence="1 3">
    <location>
        <begin position="511"/>
        <end position="531"/>
    </location>
</feature>
<feature type="transmembrane region" description="Helical" evidence="1">
    <location>
        <begin position="890"/>
        <end position="910"/>
    </location>
</feature>
<feature type="transmembrane region" description="Helical" evidence="1 3">
    <location>
        <begin position="945"/>
        <end position="965"/>
    </location>
</feature>
<feature type="transmembrane region" description="Helical" evidence="1 3">
    <location>
        <begin position="977"/>
        <end position="999"/>
    </location>
</feature>
<feature type="transmembrane region" description="Helical" evidence="1 3">
    <location>
        <begin position="1031"/>
        <end position="1051"/>
    </location>
</feature>
<feature type="transmembrane region" description="Helical" evidence="1 3">
    <location>
        <begin position="1120"/>
        <end position="1140"/>
    </location>
</feature>
<feature type="transmembrane region" description="Helical" evidence="1 3">
    <location>
        <begin position="1149"/>
        <end position="1169"/>
    </location>
</feature>
<feature type="domain" description="ABC transmembrane type-1 1" evidence="3">
    <location>
        <begin position="272"/>
        <end position="539"/>
    </location>
</feature>
<feature type="domain" description="ABC transporter 1" evidence="2">
    <location>
        <begin position="591"/>
        <end position="823"/>
    </location>
</feature>
<feature type="domain" description="ABC transmembrane type-1 2" evidence="3">
    <location>
        <begin position="902"/>
        <end position="1187"/>
    </location>
</feature>
<feature type="domain" description="ABC transporter 2" evidence="2">
    <location>
        <begin position="1214"/>
        <end position="1485"/>
    </location>
</feature>
<feature type="region of interest" description="Disordered" evidence="5">
    <location>
        <begin position="852"/>
        <end position="874"/>
    </location>
</feature>
<feature type="compositionally biased region" description="Basic and acidic residues" evidence="5">
    <location>
        <begin position="852"/>
        <end position="862"/>
    </location>
</feature>
<feature type="compositionally biased region" description="Polar residues" evidence="5">
    <location>
        <begin position="863"/>
        <end position="874"/>
    </location>
</feature>
<feature type="binding site" evidence="2">
    <location>
        <begin position="625"/>
        <end position="632"/>
    </location>
    <ligand>
        <name>ATP</name>
        <dbReference type="ChEBI" id="CHEBI:30616"/>
    </ligand>
</feature>
<feature type="binding site" evidence="2">
    <location>
        <begin position="1254"/>
        <end position="1261"/>
    </location>
    <ligand>
        <name>ATP</name>
        <dbReference type="ChEBI" id="CHEBI:30616"/>
    </ligand>
</feature>
<feature type="glycosylation site" description="N-linked (GlcNAc...) asparagine" evidence="4">
    <location>
        <position position="612"/>
    </location>
</feature>
<feature type="glycosylation site" description="N-linked (GlcNAc...) asparagine" evidence="4">
    <location>
        <position position="616"/>
    </location>
</feature>
<feature type="glycosylation site" description="N-linked (GlcNAc...) asparagine" evidence="4">
    <location>
        <position position="670"/>
    </location>
</feature>
<feature type="mutagenesis site" description="Does not rescue the FUM19 deletion phenotype of increased FB1 expression; when associated with V-1260." evidence="8">
    <original>K</original>
    <variation>V</variation>
    <location>
        <position position="631"/>
    </location>
</feature>
<feature type="mutagenesis site" description="Does not rescue the FUM19 deletion phenotype of increased FB1 expression; when associated with K-1397." evidence="8">
    <original>D</original>
    <variation>K</variation>
    <location>
        <position position="743"/>
    </location>
</feature>
<feature type="mutagenesis site" description="Does not rescue the FUM19 deletion phenotype of increased FB1 expression; when associated with V-631." evidence="8">
    <original>K</original>
    <variation>V</variation>
    <location>
        <position position="1260"/>
    </location>
</feature>
<feature type="mutagenesis site" description="Does not rescue the FUM19 deletion phenotype of increased FB1 expression; when associated with K-743." evidence="8">
    <original>D</original>
    <variation>K</variation>
    <location>
        <position position="1397"/>
    </location>
</feature>
<reference key="1">
    <citation type="journal article" date="2003" name="Fungal Genet. Biol.">
        <title>Co-expression of 15 contiguous genes delineates a fumonisin biosynthetic gene cluster in Gibberella moniliformis.</title>
        <authorList>
            <person name="Proctor R.H."/>
            <person name="Brown D.W."/>
            <person name="Plattner R.D."/>
            <person name="Desjardins A.E."/>
        </authorList>
    </citation>
    <scope>NUCLEOTIDE SEQUENCE [GENOMIC DNA]</scope>
    <scope>FUNCTION</scope>
    <scope>DISRUPTION PHENOTYPE</scope>
    <source>
        <strain>M3125 / FGSC 7600</strain>
    </source>
</reference>
<reference key="2">
    <citation type="journal article" date="2010" name="Nature">
        <title>Comparative genomics reveals mobile pathogenicity chromosomes in Fusarium.</title>
        <authorList>
            <person name="Ma L.-J."/>
            <person name="van der Does H.C."/>
            <person name="Borkovich K.A."/>
            <person name="Coleman J.J."/>
            <person name="Daboussi M.-J."/>
            <person name="Di Pietro A."/>
            <person name="Dufresne M."/>
            <person name="Freitag M."/>
            <person name="Grabherr M."/>
            <person name="Henrissat B."/>
            <person name="Houterman P.M."/>
            <person name="Kang S."/>
            <person name="Shim W.-B."/>
            <person name="Woloshuk C."/>
            <person name="Xie X."/>
            <person name="Xu J.-R."/>
            <person name="Antoniw J."/>
            <person name="Baker S.E."/>
            <person name="Bluhm B.H."/>
            <person name="Breakspear A."/>
            <person name="Brown D.W."/>
            <person name="Butchko R.A.E."/>
            <person name="Chapman S."/>
            <person name="Coulson R."/>
            <person name="Coutinho P.M."/>
            <person name="Danchin E.G.J."/>
            <person name="Diener A."/>
            <person name="Gale L.R."/>
            <person name="Gardiner D.M."/>
            <person name="Goff S."/>
            <person name="Hammond-Kosack K.E."/>
            <person name="Hilburn K."/>
            <person name="Hua-Van A."/>
            <person name="Jonkers W."/>
            <person name="Kazan K."/>
            <person name="Kodira C.D."/>
            <person name="Koehrsen M."/>
            <person name="Kumar L."/>
            <person name="Lee Y.-H."/>
            <person name="Li L."/>
            <person name="Manners J.M."/>
            <person name="Miranda-Saavedra D."/>
            <person name="Mukherjee M."/>
            <person name="Park G."/>
            <person name="Park J."/>
            <person name="Park S.-Y."/>
            <person name="Proctor R.H."/>
            <person name="Regev A."/>
            <person name="Ruiz-Roldan M.C."/>
            <person name="Sain D."/>
            <person name="Sakthikumar S."/>
            <person name="Sykes S."/>
            <person name="Schwartz D.C."/>
            <person name="Turgeon B.G."/>
            <person name="Wapinski I."/>
            <person name="Yoder O."/>
            <person name="Young S."/>
            <person name="Zeng Q."/>
            <person name="Zhou S."/>
            <person name="Galagan J."/>
            <person name="Cuomo C.A."/>
            <person name="Kistler H.C."/>
            <person name="Rep M."/>
        </authorList>
    </citation>
    <scope>NUCLEOTIDE SEQUENCE [LARGE SCALE GENOMIC DNA]</scope>
    <source>
        <strain>M3125 / FGSC 7600</strain>
    </source>
</reference>
<reference key="3">
    <citation type="journal article" date="2014" name="Int. J. Food Microbiol.">
        <title>Combined effects of benomyl and environmental factors on growth and expression of the fumonisin biosynthetic genes FUM1 and FUM19 by Fusarium verticillioides.</title>
        <authorList>
            <person name="Cruz A."/>
            <person name="Marin P."/>
            <person name="Magan N."/>
            <person name="Gonzalez-Jaen M.T."/>
        </authorList>
    </citation>
    <scope>INDUCTION</scope>
</reference>
<reference evidence="10" key="4">
    <citation type="journal article" date="2020" name="MBio">
        <title>Self-Protection against the Sphingolipid Biosynthesis Inhibitor Fumonisin B1 Is Conferred by a FUM Cluster-Encoded Ceramide Synthase.</title>
        <authorList>
            <person name="Janevska S."/>
            <person name="Ferling I."/>
            <person name="Jojic K."/>
            <person name="Rautschek J."/>
            <person name="Hoefgen S."/>
            <person name="Proctor R.H."/>
            <person name="Hillmann F."/>
            <person name="Valiante V."/>
        </authorList>
    </citation>
    <scope>FUNCTION</scope>
    <scope>INDUCTION BY FUMONISIN B1</scope>
    <scope>DISRUPTION PHENOTYPE</scope>
    <scope>MUTAGENESIS OF LYS-631; ASP-743; LYS-1260 AND ASP-1397</scope>
</reference>
<dbReference type="EMBL" id="AF155773">
    <property type="protein sequence ID" value="AAN74822.1"/>
    <property type="molecule type" value="Genomic_DNA"/>
</dbReference>
<dbReference type="EMBL" id="CM000578">
    <property type="protein sequence ID" value="EWG36213.1"/>
    <property type="status" value="ALT_SEQ"/>
    <property type="molecule type" value="Genomic_DNA"/>
</dbReference>
<dbReference type="RefSeq" id="XP_018742404.1">
    <property type="nucleotide sequence ID" value="XM_018886768.1"/>
</dbReference>
<dbReference type="SMR" id="Q8J2Q1"/>
<dbReference type="TCDB" id="3.A.1.208.40">
    <property type="family name" value="the atp-binding cassette (abc) superfamily"/>
</dbReference>
<dbReference type="GlyCosmos" id="Q8J2Q1">
    <property type="glycosylation" value="3 sites, No reported glycans"/>
</dbReference>
<dbReference type="EnsemblFungi" id="FVEG_00329T0">
    <property type="protein sequence ID" value="FVEG_00329T0"/>
    <property type="gene ID" value="FVEG_00329"/>
</dbReference>
<dbReference type="GeneID" id="30058706"/>
<dbReference type="KEGG" id="fvr:FVEG_00329"/>
<dbReference type="eggNOG" id="KOG0054">
    <property type="taxonomic scope" value="Eukaryota"/>
</dbReference>
<dbReference type="OMA" id="RWISSKD"/>
<dbReference type="OrthoDB" id="105889at110618"/>
<dbReference type="Proteomes" id="UP000009096">
    <property type="component" value="Chromosome 1"/>
</dbReference>
<dbReference type="GO" id="GO:0005886">
    <property type="term" value="C:plasma membrane"/>
    <property type="evidence" value="ECO:0007669"/>
    <property type="project" value="UniProtKB-SubCell"/>
</dbReference>
<dbReference type="GO" id="GO:0140359">
    <property type="term" value="F:ABC-type transporter activity"/>
    <property type="evidence" value="ECO:0007669"/>
    <property type="project" value="InterPro"/>
</dbReference>
<dbReference type="GO" id="GO:0005524">
    <property type="term" value="F:ATP binding"/>
    <property type="evidence" value="ECO:0007669"/>
    <property type="project" value="UniProtKB-KW"/>
</dbReference>
<dbReference type="GO" id="GO:0016887">
    <property type="term" value="F:ATP hydrolysis activity"/>
    <property type="evidence" value="ECO:0007669"/>
    <property type="project" value="InterPro"/>
</dbReference>
<dbReference type="CDD" id="cd18579">
    <property type="entry name" value="ABC_6TM_ABCC_D1"/>
    <property type="match status" value="1"/>
</dbReference>
<dbReference type="CDD" id="cd18580">
    <property type="entry name" value="ABC_6TM_ABCC_D2"/>
    <property type="match status" value="1"/>
</dbReference>
<dbReference type="CDD" id="cd03250">
    <property type="entry name" value="ABCC_MRP_domain1"/>
    <property type="match status" value="1"/>
</dbReference>
<dbReference type="FunFam" id="1.20.1560.10:FF:000055">
    <property type="entry name" value="ABC multidrug transporter (Eurofung)"/>
    <property type="match status" value="1"/>
</dbReference>
<dbReference type="FunFam" id="1.20.1560.10:FF:000066">
    <property type="entry name" value="ABC multidrug transporter (Eurofung)"/>
    <property type="match status" value="1"/>
</dbReference>
<dbReference type="Gene3D" id="1.20.1560.10">
    <property type="entry name" value="ABC transporter type 1, transmembrane domain"/>
    <property type="match status" value="2"/>
</dbReference>
<dbReference type="Gene3D" id="3.40.50.300">
    <property type="entry name" value="P-loop containing nucleotide triphosphate hydrolases"/>
    <property type="match status" value="2"/>
</dbReference>
<dbReference type="InterPro" id="IPR003593">
    <property type="entry name" value="AAA+_ATPase"/>
</dbReference>
<dbReference type="InterPro" id="IPR011527">
    <property type="entry name" value="ABC1_TM_dom"/>
</dbReference>
<dbReference type="InterPro" id="IPR036640">
    <property type="entry name" value="ABC1_TM_sf"/>
</dbReference>
<dbReference type="InterPro" id="IPR003439">
    <property type="entry name" value="ABC_transporter-like_ATP-bd"/>
</dbReference>
<dbReference type="InterPro" id="IPR017871">
    <property type="entry name" value="ABC_transporter-like_CS"/>
</dbReference>
<dbReference type="InterPro" id="IPR050173">
    <property type="entry name" value="ABC_transporter_C-like"/>
</dbReference>
<dbReference type="InterPro" id="IPR044746">
    <property type="entry name" value="ABCC_6TM_D1"/>
</dbReference>
<dbReference type="InterPro" id="IPR044726">
    <property type="entry name" value="ABCC_6TM_D2"/>
</dbReference>
<dbReference type="InterPro" id="IPR027417">
    <property type="entry name" value="P-loop_NTPase"/>
</dbReference>
<dbReference type="PANTHER" id="PTHR24223:SF345">
    <property type="entry name" value="ABC MULTIDRUG TRANSPORTER (EUROFUNG)"/>
    <property type="match status" value="1"/>
</dbReference>
<dbReference type="PANTHER" id="PTHR24223">
    <property type="entry name" value="ATP-BINDING CASSETTE SUB-FAMILY C"/>
    <property type="match status" value="1"/>
</dbReference>
<dbReference type="Pfam" id="PF00664">
    <property type="entry name" value="ABC_membrane"/>
    <property type="match status" value="2"/>
</dbReference>
<dbReference type="Pfam" id="PF00005">
    <property type="entry name" value="ABC_tran"/>
    <property type="match status" value="2"/>
</dbReference>
<dbReference type="SMART" id="SM00382">
    <property type="entry name" value="AAA"/>
    <property type="match status" value="2"/>
</dbReference>
<dbReference type="SUPFAM" id="SSF90123">
    <property type="entry name" value="ABC transporter transmembrane region"/>
    <property type="match status" value="2"/>
</dbReference>
<dbReference type="SUPFAM" id="SSF52540">
    <property type="entry name" value="P-loop containing nucleoside triphosphate hydrolases"/>
    <property type="match status" value="2"/>
</dbReference>
<dbReference type="PROSITE" id="PS50929">
    <property type="entry name" value="ABC_TM1F"/>
    <property type="match status" value="2"/>
</dbReference>
<dbReference type="PROSITE" id="PS00211">
    <property type="entry name" value="ABC_TRANSPORTER_1"/>
    <property type="match status" value="2"/>
</dbReference>
<dbReference type="PROSITE" id="PS50893">
    <property type="entry name" value="ABC_TRANSPORTER_2"/>
    <property type="match status" value="2"/>
</dbReference>
<proteinExistence type="evidence at protein level"/>
<accession>Q8J2Q1</accession>
<accession>W7L9F5</accession>
<organism>
    <name type="scientific">Gibberella moniliformis (strain M3125 / FGSC 7600)</name>
    <name type="common">Maize ear and stalk rot fungus</name>
    <name type="synonym">Fusarium verticillioides</name>
    <dbReference type="NCBI Taxonomy" id="334819"/>
    <lineage>
        <taxon>Eukaryota</taxon>
        <taxon>Fungi</taxon>
        <taxon>Dikarya</taxon>
        <taxon>Ascomycota</taxon>
        <taxon>Pezizomycotina</taxon>
        <taxon>Sordariomycetes</taxon>
        <taxon>Hypocreomycetidae</taxon>
        <taxon>Hypocreales</taxon>
        <taxon>Nectriaceae</taxon>
        <taxon>Fusarium</taxon>
        <taxon>Fusarium fujikuroi species complex</taxon>
    </lineage>
</organism>
<name>FUM19_GIBM7</name>
<evidence type="ECO:0000255" key="1"/>
<evidence type="ECO:0000255" key="2">
    <source>
        <dbReference type="PROSITE-ProRule" id="PRU00434"/>
    </source>
</evidence>
<evidence type="ECO:0000255" key="3">
    <source>
        <dbReference type="PROSITE-ProRule" id="PRU00441"/>
    </source>
</evidence>
<evidence type="ECO:0000255" key="4">
    <source>
        <dbReference type="PROSITE-ProRule" id="PRU00498"/>
    </source>
</evidence>
<evidence type="ECO:0000256" key="5">
    <source>
        <dbReference type="SAM" id="MobiDB-lite"/>
    </source>
</evidence>
<evidence type="ECO:0000269" key="6">
    <source>
    </source>
</evidence>
<evidence type="ECO:0000269" key="7">
    <source>
    </source>
</evidence>
<evidence type="ECO:0000269" key="8">
    <source>
    </source>
</evidence>
<evidence type="ECO:0000303" key="9">
    <source>
    </source>
</evidence>
<evidence type="ECO:0000305" key="10"/>